<feature type="chain" id="PRO_1000079796" description="Large ribosomal subunit protein bL12">
    <location>
        <begin position="1"/>
        <end position="126"/>
    </location>
</feature>
<feature type="region of interest" description="Disordered" evidence="2">
    <location>
        <begin position="97"/>
        <end position="126"/>
    </location>
</feature>
<feature type="compositionally biased region" description="Basic and acidic residues" evidence="2">
    <location>
        <begin position="104"/>
        <end position="116"/>
    </location>
</feature>
<dbReference type="EMBL" id="CP000698">
    <property type="protein sequence ID" value="ABQ25266.1"/>
    <property type="molecule type" value="Genomic_DNA"/>
</dbReference>
<dbReference type="RefSeq" id="WP_011937990.1">
    <property type="nucleotide sequence ID" value="NC_009483.1"/>
</dbReference>
<dbReference type="SMR" id="A5GAY0"/>
<dbReference type="STRING" id="351605.Gura_1060"/>
<dbReference type="KEGG" id="gur:Gura_1060"/>
<dbReference type="HOGENOM" id="CLU_086499_3_0_7"/>
<dbReference type="OrthoDB" id="9811748at2"/>
<dbReference type="Proteomes" id="UP000006695">
    <property type="component" value="Chromosome"/>
</dbReference>
<dbReference type="GO" id="GO:0022625">
    <property type="term" value="C:cytosolic large ribosomal subunit"/>
    <property type="evidence" value="ECO:0007669"/>
    <property type="project" value="TreeGrafter"/>
</dbReference>
<dbReference type="GO" id="GO:0003729">
    <property type="term" value="F:mRNA binding"/>
    <property type="evidence" value="ECO:0007669"/>
    <property type="project" value="TreeGrafter"/>
</dbReference>
<dbReference type="GO" id="GO:0003735">
    <property type="term" value="F:structural constituent of ribosome"/>
    <property type="evidence" value="ECO:0007669"/>
    <property type="project" value="InterPro"/>
</dbReference>
<dbReference type="GO" id="GO:0006412">
    <property type="term" value="P:translation"/>
    <property type="evidence" value="ECO:0007669"/>
    <property type="project" value="UniProtKB-UniRule"/>
</dbReference>
<dbReference type="CDD" id="cd00387">
    <property type="entry name" value="Ribosomal_L7_L12"/>
    <property type="match status" value="1"/>
</dbReference>
<dbReference type="FunFam" id="3.30.1390.10:FF:000001">
    <property type="entry name" value="50S ribosomal protein L7/L12"/>
    <property type="match status" value="1"/>
</dbReference>
<dbReference type="Gene3D" id="3.30.1390.10">
    <property type="match status" value="1"/>
</dbReference>
<dbReference type="Gene3D" id="1.20.5.710">
    <property type="entry name" value="Single helix bin"/>
    <property type="match status" value="1"/>
</dbReference>
<dbReference type="HAMAP" id="MF_00368">
    <property type="entry name" value="Ribosomal_bL12"/>
    <property type="match status" value="1"/>
</dbReference>
<dbReference type="InterPro" id="IPR000206">
    <property type="entry name" value="Ribosomal_bL12"/>
</dbReference>
<dbReference type="InterPro" id="IPR013823">
    <property type="entry name" value="Ribosomal_bL12_C"/>
</dbReference>
<dbReference type="InterPro" id="IPR014719">
    <property type="entry name" value="Ribosomal_bL12_C/ClpS-like"/>
</dbReference>
<dbReference type="InterPro" id="IPR008932">
    <property type="entry name" value="Ribosomal_bL12_oligo"/>
</dbReference>
<dbReference type="InterPro" id="IPR036235">
    <property type="entry name" value="Ribosomal_bL12_oligo_N_sf"/>
</dbReference>
<dbReference type="NCBIfam" id="TIGR00855">
    <property type="entry name" value="L12"/>
    <property type="match status" value="1"/>
</dbReference>
<dbReference type="PANTHER" id="PTHR45987">
    <property type="entry name" value="39S RIBOSOMAL PROTEIN L12"/>
    <property type="match status" value="1"/>
</dbReference>
<dbReference type="PANTHER" id="PTHR45987:SF4">
    <property type="entry name" value="LARGE RIBOSOMAL SUBUNIT PROTEIN BL12M"/>
    <property type="match status" value="1"/>
</dbReference>
<dbReference type="Pfam" id="PF00542">
    <property type="entry name" value="Ribosomal_L12"/>
    <property type="match status" value="1"/>
</dbReference>
<dbReference type="Pfam" id="PF16320">
    <property type="entry name" value="Ribosomal_L12_N"/>
    <property type="match status" value="1"/>
</dbReference>
<dbReference type="SUPFAM" id="SSF54736">
    <property type="entry name" value="ClpS-like"/>
    <property type="match status" value="1"/>
</dbReference>
<dbReference type="SUPFAM" id="SSF48300">
    <property type="entry name" value="Ribosomal protein L7/12, oligomerisation (N-terminal) domain"/>
    <property type="match status" value="1"/>
</dbReference>
<comment type="function">
    <text evidence="1">Forms part of the ribosomal stalk which helps the ribosome interact with GTP-bound translation factors. Is thus essential for accurate translation.</text>
</comment>
<comment type="subunit">
    <text evidence="1">Homodimer. Part of the ribosomal stalk of the 50S ribosomal subunit. Forms a multimeric L10(L12)X complex, where L10 forms an elongated spine to which 2 to 4 L12 dimers bind in a sequential fashion. Binds GTP-bound translation factors.</text>
</comment>
<comment type="similarity">
    <text evidence="1">Belongs to the bacterial ribosomal protein bL12 family.</text>
</comment>
<organism>
    <name type="scientific">Geotalea uraniireducens (strain Rf4)</name>
    <name type="common">Geobacter uraniireducens</name>
    <dbReference type="NCBI Taxonomy" id="351605"/>
    <lineage>
        <taxon>Bacteria</taxon>
        <taxon>Pseudomonadati</taxon>
        <taxon>Thermodesulfobacteriota</taxon>
        <taxon>Desulfuromonadia</taxon>
        <taxon>Geobacterales</taxon>
        <taxon>Geobacteraceae</taxon>
        <taxon>Geotalea</taxon>
    </lineage>
</organism>
<name>RL7_GEOUR</name>
<proteinExistence type="inferred from homology"/>
<keyword id="KW-1185">Reference proteome</keyword>
<keyword id="KW-0687">Ribonucleoprotein</keyword>
<keyword id="KW-0689">Ribosomal protein</keyword>
<evidence type="ECO:0000255" key="1">
    <source>
        <dbReference type="HAMAP-Rule" id="MF_00368"/>
    </source>
</evidence>
<evidence type="ECO:0000256" key="2">
    <source>
        <dbReference type="SAM" id="MobiDB-lite"/>
    </source>
</evidence>
<evidence type="ECO:0000305" key="3"/>
<protein>
    <recommendedName>
        <fullName evidence="1">Large ribosomal subunit protein bL12</fullName>
    </recommendedName>
    <alternativeName>
        <fullName evidence="3">50S ribosomal protein L7/L12</fullName>
    </alternativeName>
</protein>
<reference key="1">
    <citation type="submission" date="2007-05" db="EMBL/GenBank/DDBJ databases">
        <title>Complete sequence of Geobacter uraniireducens Rf4.</title>
        <authorList>
            <consortium name="US DOE Joint Genome Institute"/>
            <person name="Copeland A."/>
            <person name="Lucas S."/>
            <person name="Lapidus A."/>
            <person name="Barry K."/>
            <person name="Detter J.C."/>
            <person name="Glavina del Rio T."/>
            <person name="Hammon N."/>
            <person name="Israni S."/>
            <person name="Dalin E."/>
            <person name="Tice H."/>
            <person name="Pitluck S."/>
            <person name="Chertkov O."/>
            <person name="Brettin T."/>
            <person name="Bruce D."/>
            <person name="Han C."/>
            <person name="Schmutz J."/>
            <person name="Larimer F."/>
            <person name="Land M."/>
            <person name="Hauser L."/>
            <person name="Kyrpides N."/>
            <person name="Mikhailova N."/>
            <person name="Shelobolina E."/>
            <person name="Aklujkar M."/>
            <person name="Lovley D."/>
            <person name="Richardson P."/>
        </authorList>
    </citation>
    <scope>NUCLEOTIDE SEQUENCE [LARGE SCALE GENOMIC DNA]</scope>
    <source>
        <strain>ATCC BAA-1134 / JCM 13001 / Rf4</strain>
    </source>
</reference>
<gene>
    <name evidence="1" type="primary">rplL</name>
    <name type="ordered locus">Gura_1060</name>
</gene>
<accession>A5GAY0</accession>
<sequence>MAEITKADVITFIEKMSVLDLAEMVKELEEKFGVSAAAPVAVAAVAGPAVAEAAEEQTEFDVILKAAGANKIAVIKVVRALTSLGLKEAKDLVDGAPQPVKSGVSKEEAEEAKKQLAESGAEVEVK</sequence>